<reference key="1">
    <citation type="journal article" date="1990" name="J. Immunol.">
        <title>Molecular cloning and expression of the mouse high affinity Fc receptor for IgG.</title>
        <authorList>
            <person name="Sears D.W."/>
            <person name="Osman N."/>
            <person name="Tate B."/>
            <person name="McKenzie I.F.C."/>
            <person name="Hogarth P.M."/>
        </authorList>
    </citation>
    <scope>NUCLEOTIDE SEQUENCE [MRNA]</scope>
</reference>
<reference key="2">
    <citation type="journal article" date="1992" name="J. Immunol.">
        <title>Structure and mapping of the gene encoding mouse high affinity Fc gamma RI and chromosomal location of the human Fc gamma RI gene.</title>
        <authorList>
            <person name="Osman N."/>
            <person name="Kozak C.A."/>
            <person name="McKenzie I.F.C."/>
            <person name="Hogarth P.M."/>
        </authorList>
    </citation>
    <scope>NUCLEOTIDE SEQUENCE [MRNA]</scope>
</reference>
<reference key="3">
    <citation type="journal article" date="1993" name="Immunology">
        <title>Biochemical characterization of murine Fc gamma RI.</title>
        <authorList>
            <person name="Quilliam A.L."/>
            <person name="Osman N."/>
            <person name="McKenzie I.F.C."/>
            <person name="Hogarth P.M."/>
        </authorList>
    </citation>
    <scope>GLYCOSYLATION</scope>
    <scope>PHOSPHORYLATION</scope>
</reference>
<reference key="4">
    <citation type="journal article" date="2002" name="Immunity">
        <title>FcgammaRI-deficient mice show multiple alterations to inflammatory and immune responses.</title>
        <authorList>
            <person name="Barnes N."/>
            <person name="Gavin A.L."/>
            <person name="Tan P.S."/>
            <person name="Mottram P."/>
            <person name="Koentgen F."/>
            <person name="Hogarth P.M."/>
        </authorList>
    </citation>
    <scope>FUNCTION</scope>
    <scope>DISRUPTION PHENOTYPE</scope>
</reference>
<reference key="5">
    <citation type="journal article" date="2002" name="Immunity">
        <title>FcgammaRI (CD64) contributes substantially to severity of arthritis, hypersensitivity responses, and protection from bacterial infection.</title>
        <authorList>
            <person name="Ioan-Facsinay A."/>
            <person name="de Kimpe S.J."/>
            <person name="Hellwig S.M.M."/>
            <person name="van Lent P.L."/>
            <person name="Hofhuis F.M.A."/>
            <person name="van Ojik H.H."/>
            <person name="Sedlik C."/>
            <person name="da Silveira S.A."/>
            <person name="Gerber J."/>
            <person name="de Jong Y.F."/>
            <person name="Roozendaal R."/>
            <person name="Aarden L.A."/>
            <person name="van den Berg W.B."/>
            <person name="Saito T."/>
            <person name="Mosser D."/>
            <person name="Amigorena S."/>
            <person name="Izui S."/>
            <person name="van Ommen G.-J.B."/>
            <person name="van Vugt M."/>
            <person name="van de Winkel J.G.J."/>
            <person name="Verbeek J.S."/>
        </authorList>
    </citation>
    <scope>FUNCTION</scope>
    <scope>DISRUPTION PHENOTYPE</scope>
</reference>
<reference key="6">
    <citation type="journal article" date="2009" name="Immunity">
        <title>The phagosomal proteome in interferon-gamma-activated macrophages.</title>
        <authorList>
            <person name="Trost M."/>
            <person name="English L."/>
            <person name="Lemieux S."/>
            <person name="Courcelles M."/>
            <person name="Desjardins M."/>
            <person name="Thibault P."/>
        </authorList>
    </citation>
    <scope>PHOSPHORYLATION [LARGE SCALE ANALYSIS] AT SER-347 AND THR-368</scope>
    <scope>IDENTIFICATION BY MASS SPECTROMETRY [LARGE SCALE ANALYSIS]</scope>
</reference>
<evidence type="ECO:0000250" key="1"/>
<evidence type="ECO:0000255" key="2"/>
<evidence type="ECO:0000255" key="3">
    <source>
        <dbReference type="PROSITE-ProRule" id="PRU00114"/>
    </source>
</evidence>
<evidence type="ECO:0000256" key="4">
    <source>
        <dbReference type="SAM" id="MobiDB-lite"/>
    </source>
</evidence>
<evidence type="ECO:0000269" key="5">
    <source>
    </source>
</evidence>
<evidence type="ECO:0000269" key="6">
    <source>
    </source>
</evidence>
<evidence type="ECO:0000269" key="7">
    <source>
    </source>
</evidence>
<evidence type="ECO:0000305" key="8"/>
<evidence type="ECO:0007744" key="9">
    <source>
    </source>
</evidence>
<accession>P26151</accession>
<protein>
    <recommendedName>
        <fullName>High affinity immunoglobulin gamma Fc receptor I</fullName>
        <shortName>IgG Fc receptor I</shortName>
    </recommendedName>
    <alternativeName>
        <fullName>Fc-gamma RI</fullName>
        <shortName>FcRI</shortName>
    </alternativeName>
    <cdAntigenName>CD64</cdAntigenName>
</protein>
<dbReference type="EMBL" id="M31314">
    <property type="protein sequence ID" value="AAA40056.1"/>
    <property type="molecule type" value="mRNA"/>
</dbReference>
<dbReference type="CCDS" id="CCDS17639.1"/>
<dbReference type="PIR" id="A46480">
    <property type="entry name" value="A46480"/>
</dbReference>
<dbReference type="RefSeq" id="NP_034316.1">
    <property type="nucleotide sequence ID" value="NM_010186.5"/>
</dbReference>
<dbReference type="SMR" id="P26151"/>
<dbReference type="BioGRID" id="199618">
    <property type="interactions" value="5"/>
</dbReference>
<dbReference type="FunCoup" id="P26151">
    <property type="interactions" value="608"/>
</dbReference>
<dbReference type="IntAct" id="P26151">
    <property type="interactions" value="1"/>
</dbReference>
<dbReference type="MINT" id="P26151"/>
<dbReference type="STRING" id="10090.ENSMUSP00000029748"/>
<dbReference type="GlyCosmos" id="P26151">
    <property type="glycosylation" value="5 sites, No reported glycans"/>
</dbReference>
<dbReference type="GlyGen" id="P26151">
    <property type="glycosylation" value="5 sites, 1 N-linked glycan (1 site)"/>
</dbReference>
<dbReference type="iPTMnet" id="P26151"/>
<dbReference type="PhosphoSitePlus" id="P26151"/>
<dbReference type="jPOST" id="P26151"/>
<dbReference type="PaxDb" id="10090-ENSMUSP00000029748"/>
<dbReference type="PeptideAtlas" id="P26151"/>
<dbReference type="ProteomicsDB" id="271684"/>
<dbReference type="DNASU" id="14129"/>
<dbReference type="Ensembl" id="ENSMUST00000029748.8">
    <property type="protein sequence ID" value="ENSMUSP00000029748.4"/>
    <property type="gene ID" value="ENSMUSG00000015947.11"/>
</dbReference>
<dbReference type="GeneID" id="14129"/>
<dbReference type="KEGG" id="mmu:14129"/>
<dbReference type="UCSC" id="uc008qmr.1">
    <property type="organism name" value="mouse"/>
</dbReference>
<dbReference type="AGR" id="MGI:95498"/>
<dbReference type="CTD" id="14129"/>
<dbReference type="MGI" id="MGI:95498">
    <property type="gene designation" value="Fcgr1"/>
</dbReference>
<dbReference type="VEuPathDB" id="HostDB:ENSMUSG00000015947"/>
<dbReference type="eggNOG" id="ENOG502S1XR">
    <property type="taxonomic scope" value="Eukaryota"/>
</dbReference>
<dbReference type="GeneTree" id="ENSGT01050000244808"/>
<dbReference type="HOGENOM" id="CLU_023383_3_0_1"/>
<dbReference type="InParanoid" id="P26151"/>
<dbReference type="OMA" id="VWFHILF"/>
<dbReference type="OrthoDB" id="9950534at2759"/>
<dbReference type="PhylomeDB" id="P26151"/>
<dbReference type="TreeFam" id="TF335097"/>
<dbReference type="Reactome" id="R-MMU-1236978">
    <property type="pathway name" value="Cross-presentation of soluble exogenous antigens (endosomes)"/>
</dbReference>
<dbReference type="Reactome" id="R-MMU-2029481">
    <property type="pathway name" value="FCGR activation"/>
</dbReference>
<dbReference type="Reactome" id="R-MMU-2029482">
    <property type="pathway name" value="Regulation of actin dynamics for phagocytic cup formation"/>
</dbReference>
<dbReference type="Reactome" id="R-MMU-2029485">
    <property type="pathway name" value="Role of phospholipids in phagocytosis"/>
</dbReference>
<dbReference type="BioGRID-ORCS" id="14129">
    <property type="hits" value="4 hits in 78 CRISPR screens"/>
</dbReference>
<dbReference type="PRO" id="PR:P26151"/>
<dbReference type="Proteomes" id="UP000000589">
    <property type="component" value="Chromosome 3"/>
</dbReference>
<dbReference type="RNAct" id="P26151">
    <property type="molecule type" value="protein"/>
</dbReference>
<dbReference type="Bgee" id="ENSMUSG00000015947">
    <property type="expression patterns" value="Expressed in stroma of bone marrow and 125 other cell types or tissues"/>
</dbReference>
<dbReference type="ExpressionAtlas" id="P26151">
    <property type="expression patterns" value="baseline and differential"/>
</dbReference>
<dbReference type="GO" id="GO:0009897">
    <property type="term" value="C:external side of plasma membrane"/>
    <property type="evidence" value="ECO:0000314"/>
    <property type="project" value="MGI"/>
</dbReference>
<dbReference type="GO" id="GO:0019771">
    <property type="term" value="F:high-affinity IgG receptor activity"/>
    <property type="evidence" value="ECO:0007669"/>
    <property type="project" value="Ensembl"/>
</dbReference>
<dbReference type="GO" id="GO:0019864">
    <property type="term" value="F:IgG binding"/>
    <property type="evidence" value="ECO:0000314"/>
    <property type="project" value="MGI"/>
</dbReference>
<dbReference type="GO" id="GO:0019770">
    <property type="term" value="F:IgG receptor activity"/>
    <property type="evidence" value="ECO:0000315"/>
    <property type="project" value="MGI"/>
</dbReference>
<dbReference type="GO" id="GO:0001788">
    <property type="term" value="P:antibody-dependent cellular cytotoxicity"/>
    <property type="evidence" value="ECO:0000315"/>
    <property type="project" value="MGI"/>
</dbReference>
<dbReference type="GO" id="GO:0019884">
    <property type="term" value="P:antigen processing and presentation of exogenous antigen"/>
    <property type="evidence" value="ECO:0000315"/>
    <property type="project" value="MGI"/>
</dbReference>
<dbReference type="GO" id="GO:0042590">
    <property type="term" value="P:antigen processing and presentation of exogenous peptide antigen via MHC class I"/>
    <property type="evidence" value="ECO:0000315"/>
    <property type="project" value="MGI"/>
</dbReference>
<dbReference type="GO" id="GO:0007166">
    <property type="term" value="P:cell surface receptor signaling pathway"/>
    <property type="evidence" value="ECO:0000315"/>
    <property type="project" value="MGI"/>
</dbReference>
<dbReference type="GO" id="GO:0042742">
    <property type="term" value="P:defense response to bacterium"/>
    <property type="evidence" value="ECO:0000315"/>
    <property type="project" value="MGI"/>
</dbReference>
<dbReference type="GO" id="GO:0045087">
    <property type="term" value="P:innate immune response"/>
    <property type="evidence" value="ECO:0007669"/>
    <property type="project" value="UniProtKB-KW"/>
</dbReference>
<dbReference type="GO" id="GO:0006911">
    <property type="term" value="P:phagocytosis, engulfment"/>
    <property type="evidence" value="ECO:0000315"/>
    <property type="project" value="MGI"/>
</dbReference>
<dbReference type="GO" id="GO:0006910">
    <property type="term" value="P:phagocytosis, recognition"/>
    <property type="evidence" value="ECO:0000315"/>
    <property type="project" value="MGI"/>
</dbReference>
<dbReference type="GO" id="GO:0050766">
    <property type="term" value="P:positive regulation of phagocytosis"/>
    <property type="evidence" value="ECO:0000315"/>
    <property type="project" value="MGI"/>
</dbReference>
<dbReference type="GO" id="GO:0001798">
    <property type="term" value="P:positive regulation of type IIa hypersensitivity"/>
    <property type="evidence" value="ECO:0000315"/>
    <property type="project" value="MGI"/>
</dbReference>
<dbReference type="GO" id="GO:0001805">
    <property type="term" value="P:positive regulation of type III hypersensitivity"/>
    <property type="evidence" value="ECO:0000315"/>
    <property type="project" value="MGI"/>
</dbReference>
<dbReference type="GO" id="GO:0006898">
    <property type="term" value="P:receptor-mediated endocytosis"/>
    <property type="evidence" value="ECO:0000315"/>
    <property type="project" value="MGI"/>
</dbReference>
<dbReference type="GO" id="GO:0050776">
    <property type="term" value="P:regulation of immune response"/>
    <property type="evidence" value="ECO:0000315"/>
    <property type="project" value="MGI"/>
</dbReference>
<dbReference type="GO" id="GO:0009617">
    <property type="term" value="P:response to bacterium"/>
    <property type="evidence" value="ECO:0000315"/>
    <property type="project" value="MGI"/>
</dbReference>
<dbReference type="CDD" id="cd05752">
    <property type="entry name" value="Ig1_FcgammaR_like"/>
    <property type="match status" value="1"/>
</dbReference>
<dbReference type="CDD" id="cd05753">
    <property type="entry name" value="Ig2_FcgammaR_like"/>
    <property type="match status" value="1"/>
</dbReference>
<dbReference type="FunFam" id="2.60.40.10:FF:000651">
    <property type="entry name" value="Fc receptor like 1"/>
    <property type="match status" value="1"/>
</dbReference>
<dbReference type="FunFam" id="2.60.40.10:FF:000217">
    <property type="entry name" value="High affinity immunoglobulin gamma Fc receptor I"/>
    <property type="match status" value="1"/>
</dbReference>
<dbReference type="FunFam" id="2.60.40.10:FF:000356">
    <property type="entry name" value="Low affinity immunoglobulin gamma Fc region receptor III-A"/>
    <property type="match status" value="1"/>
</dbReference>
<dbReference type="Gene3D" id="2.60.40.10">
    <property type="entry name" value="Immunoglobulins"/>
    <property type="match status" value="3"/>
</dbReference>
<dbReference type="InterPro" id="IPR007110">
    <property type="entry name" value="Ig-like_dom"/>
</dbReference>
<dbReference type="InterPro" id="IPR036179">
    <property type="entry name" value="Ig-like_dom_sf"/>
</dbReference>
<dbReference type="InterPro" id="IPR013783">
    <property type="entry name" value="Ig-like_fold"/>
</dbReference>
<dbReference type="InterPro" id="IPR050488">
    <property type="entry name" value="Ig_Fc_receptor"/>
</dbReference>
<dbReference type="InterPro" id="IPR003599">
    <property type="entry name" value="Ig_sub"/>
</dbReference>
<dbReference type="InterPro" id="IPR003598">
    <property type="entry name" value="Ig_sub2"/>
</dbReference>
<dbReference type="InterPro" id="IPR013151">
    <property type="entry name" value="Immunoglobulin_dom"/>
</dbReference>
<dbReference type="PANTHER" id="PTHR11481:SF11">
    <property type="entry name" value="HIGH AFFINITY IMMUNOGLOBULIN GAMMA FC RECEPTOR I-RELATED"/>
    <property type="match status" value="1"/>
</dbReference>
<dbReference type="PANTHER" id="PTHR11481">
    <property type="entry name" value="IMMUNOGLOBULIN FC RECEPTOR"/>
    <property type="match status" value="1"/>
</dbReference>
<dbReference type="Pfam" id="PF00047">
    <property type="entry name" value="ig"/>
    <property type="match status" value="1"/>
</dbReference>
<dbReference type="Pfam" id="PF13895">
    <property type="entry name" value="Ig_2"/>
    <property type="match status" value="2"/>
</dbReference>
<dbReference type="SMART" id="SM00409">
    <property type="entry name" value="IG"/>
    <property type="match status" value="3"/>
</dbReference>
<dbReference type="SMART" id="SM00408">
    <property type="entry name" value="IGc2"/>
    <property type="match status" value="3"/>
</dbReference>
<dbReference type="SUPFAM" id="SSF48726">
    <property type="entry name" value="Immunoglobulin"/>
    <property type="match status" value="3"/>
</dbReference>
<dbReference type="PROSITE" id="PS50835">
    <property type="entry name" value="IG_LIKE"/>
    <property type="match status" value="2"/>
</dbReference>
<gene>
    <name type="primary">Fcgr1</name>
    <name type="synonym">Fcg1</name>
</gene>
<feature type="signal peptide" evidence="2">
    <location>
        <begin position="1"/>
        <end position="24"/>
    </location>
</feature>
<feature type="chain" id="PRO_0000015140" description="High affinity immunoglobulin gamma Fc receptor I">
    <location>
        <begin position="25"/>
        <end position="404"/>
    </location>
</feature>
<feature type="topological domain" description="Extracellular" evidence="2">
    <location>
        <begin position="25"/>
        <end position="297"/>
    </location>
</feature>
<feature type="transmembrane region" description="Helical" evidence="2">
    <location>
        <begin position="298"/>
        <end position="320"/>
    </location>
</feature>
<feature type="topological domain" description="Cytoplasmic" evidence="2">
    <location>
        <begin position="321"/>
        <end position="404"/>
    </location>
</feature>
<feature type="domain" description="Ig-like C2-type 1">
    <location>
        <begin position="32"/>
        <end position="111"/>
    </location>
</feature>
<feature type="domain" description="Ig-like C2-type 2">
    <location>
        <begin position="117"/>
        <end position="194"/>
    </location>
</feature>
<feature type="domain" description="Ig-like C2-type 3">
    <location>
        <begin position="201"/>
        <end position="286"/>
    </location>
</feature>
<feature type="region of interest" description="Interaction with EPB41L2" evidence="1">
    <location>
        <begin position="321"/>
        <end position="342"/>
    </location>
</feature>
<feature type="region of interest" description="Disordered" evidence="4">
    <location>
        <begin position="346"/>
        <end position="404"/>
    </location>
</feature>
<feature type="compositionally biased region" description="Polar residues" evidence="4">
    <location>
        <begin position="394"/>
        <end position="404"/>
    </location>
</feature>
<feature type="modified residue" description="Phosphoserine" evidence="9">
    <location>
        <position position="347"/>
    </location>
</feature>
<feature type="modified residue" description="Phosphothreonine" evidence="9">
    <location>
        <position position="368"/>
    </location>
</feature>
<feature type="glycosylation site" description="N-linked (GlcNAc...) asparagine" evidence="2">
    <location>
        <position position="28"/>
    </location>
</feature>
<feature type="glycosylation site" description="N-linked (GlcNAc...) asparagine" evidence="2">
    <location>
        <position position="48"/>
    </location>
</feature>
<feature type="glycosylation site" description="N-linked (GlcNAc...) asparagine" evidence="2">
    <location>
        <position position="69"/>
    </location>
</feature>
<feature type="glycosylation site" description="N-linked (GlcNAc...) asparagine" evidence="2">
    <location>
        <position position="168"/>
    </location>
</feature>
<feature type="glycosylation site" description="N-linked (GlcNAc...) asparagine" evidence="2">
    <location>
        <position position="249"/>
    </location>
</feature>
<feature type="disulfide bond" evidence="3">
    <location>
        <begin position="53"/>
        <end position="95"/>
    </location>
</feature>
<feature type="disulfide bond" evidence="3">
    <location>
        <begin position="134"/>
        <end position="177"/>
    </location>
</feature>
<feature type="disulfide bond" evidence="3">
    <location>
        <begin position="221"/>
        <end position="269"/>
    </location>
</feature>
<organism>
    <name type="scientific">Mus musculus</name>
    <name type="common">Mouse</name>
    <dbReference type="NCBI Taxonomy" id="10090"/>
    <lineage>
        <taxon>Eukaryota</taxon>
        <taxon>Metazoa</taxon>
        <taxon>Chordata</taxon>
        <taxon>Craniata</taxon>
        <taxon>Vertebrata</taxon>
        <taxon>Euteleostomi</taxon>
        <taxon>Mammalia</taxon>
        <taxon>Eutheria</taxon>
        <taxon>Euarchontoglires</taxon>
        <taxon>Glires</taxon>
        <taxon>Rodentia</taxon>
        <taxon>Myomorpha</taxon>
        <taxon>Muroidea</taxon>
        <taxon>Muridae</taxon>
        <taxon>Murinae</taxon>
        <taxon>Mus</taxon>
        <taxon>Mus</taxon>
    </lineage>
</organism>
<proteinExistence type="evidence at protein level"/>
<name>FCGR1_MOUSE</name>
<comment type="function">
    <text evidence="5 6">High affinity receptor for the Fc region of immunoglobulins gamma. Functions in both innate and adaptive immune responses.</text>
</comment>
<comment type="subunit">
    <text evidence="1">Interacts with FCERG1; forms a functional signaling complex (By similarity). Interacts with FLNA; prevents FCGR1A degradation (By similarity). Interacts with EPB41L2, LAT and PPL. Interacts with HCK and LYN (By similarity).</text>
</comment>
<comment type="subcellular location">
    <subcellularLocation>
        <location>Cell membrane</location>
        <topology>Single-pass type I membrane protein</topology>
    </subcellularLocation>
    <text evidence="1">Stabilized at the cell membrane through interaction with FCER1G.</text>
</comment>
<comment type="tissue specificity">
    <text>Macrophage-specific.</text>
</comment>
<comment type="PTM">
    <text evidence="7">N-glycosylated.</text>
</comment>
<comment type="PTM">
    <text evidence="7">Phosphorylated on serine residues.</text>
</comment>
<comment type="disruption phenotype">
    <text evidence="5 6">According to PubMed:11911823, mice display altered endocytosis of monomeric IgG and impaired antibody-dependent killing of cells by macrophage. Antigen presentation is also affected and those mice develop only reduced inflammatory responses. An increased in IgG responses is also detected associated with an increased number of antibody-forming cells. PubMed:11911824, also reported that a variety of IgG2a-immune complex-dependent immune functions like protection against bacterial infection were impaired.</text>
</comment>
<comment type="similarity">
    <text evidence="8">Belongs to the immunoglobulin superfamily. FCGR1 family.</text>
</comment>
<comment type="caution">
    <text evidence="8">It is uncertain whether Met-1 or Met-10 is the initiator.</text>
</comment>
<sequence length="404" mass="44888">MILTSFGDDMWLLTTLLLWVPVGGEVVNATKAVITLQPPWVSIFQKENVTLWCEGPHLPGDSSTQWFINGTAVQISTPSYSIPEASFQDSGEYRCQIGSSMPSDPVQLQIHNDWLLLQASRRVLTEGEPLALRCHGWKNKLVYNVVFYRNGKSFQFSSDSEVAILKTNLSHSGIYHCSGTGRHRYTSAGVSITVKELFTTPVLRASVSSPFPEGSLVTLNCETNLLLQRPGLQLHFSFYVGSKILEYRNTSSEYHIARAEREDAGFYWCEVATEDSSVLKRSPELELQVLGPQSSAPVWFHILFYLSVGIMFSLNTVLYVKIHRLQREKKYNLEVPLVSEQGKKANSFQQVRSDGVYEEVTATASQTTPKEAPDGPRSSVGDCGPEQPEPLPPSDSTGAQTSQS</sequence>
<keyword id="KW-1003">Cell membrane</keyword>
<keyword id="KW-1015">Disulfide bond</keyword>
<keyword id="KW-0325">Glycoprotein</keyword>
<keyword id="KW-0390">IgG-binding protein</keyword>
<keyword id="KW-0391">Immunity</keyword>
<keyword id="KW-0393">Immunoglobulin domain</keyword>
<keyword id="KW-0399">Innate immunity</keyword>
<keyword id="KW-0472">Membrane</keyword>
<keyword id="KW-0597">Phosphoprotein</keyword>
<keyword id="KW-0675">Receptor</keyword>
<keyword id="KW-1185">Reference proteome</keyword>
<keyword id="KW-0677">Repeat</keyword>
<keyword id="KW-0732">Signal</keyword>
<keyword id="KW-0812">Transmembrane</keyword>
<keyword id="KW-1133">Transmembrane helix</keyword>